<gene>
    <name type="ordered locus">BAbS19_II06010</name>
</gene>
<accession>B2SB59</accession>
<evidence type="ECO:0000255" key="1">
    <source>
        <dbReference type="HAMAP-Rule" id="MF_00651"/>
    </source>
</evidence>
<protein>
    <recommendedName>
        <fullName evidence="1">Putative pre-16S rRNA nuclease</fullName>
        <ecNumber evidence="1">3.1.-.-</ecNumber>
    </recommendedName>
</protein>
<sequence length="162" mass="17559">MATAEIEEIPALLKPGQTVAGLDLGTKTIGLAVSDLGLSFAHPRPVIKRVKFTIDAQVLLKALETDKVGVIMIGLPMNMDGTAGPRVQATRAFVRTMQPLTDLPFVFWDERLSTVAAERALIGMDVSRGKRADRIDSAAAAFILQGALDRLHMMRRNDYDAG</sequence>
<keyword id="KW-0963">Cytoplasm</keyword>
<keyword id="KW-0378">Hydrolase</keyword>
<keyword id="KW-0540">Nuclease</keyword>
<keyword id="KW-0690">Ribosome biogenesis</keyword>
<name>YQGF_BRUA1</name>
<comment type="function">
    <text evidence="1">Could be a nuclease involved in processing of the 5'-end of pre-16S rRNA.</text>
</comment>
<comment type="subcellular location">
    <subcellularLocation>
        <location evidence="1">Cytoplasm</location>
    </subcellularLocation>
</comment>
<comment type="similarity">
    <text evidence="1">Belongs to the YqgF nuclease family.</text>
</comment>
<organism>
    <name type="scientific">Brucella abortus (strain S19)</name>
    <dbReference type="NCBI Taxonomy" id="430066"/>
    <lineage>
        <taxon>Bacteria</taxon>
        <taxon>Pseudomonadati</taxon>
        <taxon>Pseudomonadota</taxon>
        <taxon>Alphaproteobacteria</taxon>
        <taxon>Hyphomicrobiales</taxon>
        <taxon>Brucellaceae</taxon>
        <taxon>Brucella/Ochrobactrum group</taxon>
        <taxon>Brucella</taxon>
    </lineage>
</organism>
<feature type="chain" id="PRO_1000131003" description="Putative pre-16S rRNA nuclease">
    <location>
        <begin position="1"/>
        <end position="162"/>
    </location>
</feature>
<dbReference type="EC" id="3.1.-.-" evidence="1"/>
<dbReference type="EMBL" id="CP000888">
    <property type="protein sequence ID" value="ACD74096.1"/>
    <property type="molecule type" value="Genomic_DNA"/>
</dbReference>
<dbReference type="SMR" id="B2SB59"/>
<dbReference type="KEGG" id="bmc:BAbS19_II06010"/>
<dbReference type="HOGENOM" id="CLU_098240_1_1_5"/>
<dbReference type="Proteomes" id="UP000002565">
    <property type="component" value="Chromosome 2"/>
</dbReference>
<dbReference type="GO" id="GO:0005829">
    <property type="term" value="C:cytosol"/>
    <property type="evidence" value="ECO:0007669"/>
    <property type="project" value="TreeGrafter"/>
</dbReference>
<dbReference type="GO" id="GO:0004518">
    <property type="term" value="F:nuclease activity"/>
    <property type="evidence" value="ECO:0007669"/>
    <property type="project" value="UniProtKB-KW"/>
</dbReference>
<dbReference type="GO" id="GO:0000967">
    <property type="term" value="P:rRNA 5'-end processing"/>
    <property type="evidence" value="ECO:0007669"/>
    <property type="project" value="UniProtKB-UniRule"/>
</dbReference>
<dbReference type="CDD" id="cd16964">
    <property type="entry name" value="YqgF"/>
    <property type="match status" value="1"/>
</dbReference>
<dbReference type="Gene3D" id="3.30.420.140">
    <property type="entry name" value="YqgF/RNase H-like domain"/>
    <property type="match status" value="1"/>
</dbReference>
<dbReference type="HAMAP" id="MF_00651">
    <property type="entry name" value="Nuclease_YqgF"/>
    <property type="match status" value="1"/>
</dbReference>
<dbReference type="InterPro" id="IPR012337">
    <property type="entry name" value="RNaseH-like_sf"/>
</dbReference>
<dbReference type="InterPro" id="IPR005227">
    <property type="entry name" value="YqgF"/>
</dbReference>
<dbReference type="InterPro" id="IPR006641">
    <property type="entry name" value="YqgF/RNaseH-like_dom"/>
</dbReference>
<dbReference type="InterPro" id="IPR037027">
    <property type="entry name" value="YqgF/RNaseH-like_dom_sf"/>
</dbReference>
<dbReference type="NCBIfam" id="TIGR00250">
    <property type="entry name" value="RNAse_H_YqgF"/>
    <property type="match status" value="1"/>
</dbReference>
<dbReference type="PANTHER" id="PTHR33317">
    <property type="entry name" value="POLYNUCLEOTIDYL TRANSFERASE, RIBONUCLEASE H-LIKE SUPERFAMILY PROTEIN"/>
    <property type="match status" value="1"/>
</dbReference>
<dbReference type="PANTHER" id="PTHR33317:SF4">
    <property type="entry name" value="POLYNUCLEOTIDYL TRANSFERASE, RIBONUCLEASE H-LIKE SUPERFAMILY PROTEIN"/>
    <property type="match status" value="1"/>
</dbReference>
<dbReference type="Pfam" id="PF03652">
    <property type="entry name" value="RuvX"/>
    <property type="match status" value="1"/>
</dbReference>
<dbReference type="SMART" id="SM00732">
    <property type="entry name" value="YqgFc"/>
    <property type="match status" value="1"/>
</dbReference>
<dbReference type="SUPFAM" id="SSF53098">
    <property type="entry name" value="Ribonuclease H-like"/>
    <property type="match status" value="1"/>
</dbReference>
<reference key="1">
    <citation type="journal article" date="2008" name="PLoS ONE">
        <title>Genome sequence of Brucella abortus vaccine strain S19 compared to virulent strains yields candidate virulence genes.</title>
        <authorList>
            <person name="Crasta O.R."/>
            <person name="Folkerts O."/>
            <person name="Fei Z."/>
            <person name="Mane S.P."/>
            <person name="Evans C."/>
            <person name="Martino-Catt S."/>
            <person name="Bricker B."/>
            <person name="Yu G."/>
            <person name="Du L."/>
            <person name="Sobral B.W."/>
        </authorList>
    </citation>
    <scope>NUCLEOTIDE SEQUENCE [LARGE SCALE GENOMIC DNA]</scope>
    <source>
        <strain>S19</strain>
    </source>
</reference>
<proteinExistence type="inferred from homology"/>